<dbReference type="EC" id="1.4.99.-" evidence="1"/>
<dbReference type="EMBL" id="AE008918">
    <property type="protein sequence ID" value="AAL53615.1"/>
    <property type="molecule type" value="Genomic_DNA"/>
</dbReference>
<dbReference type="PIR" id="AD3556">
    <property type="entry name" value="AD3556"/>
</dbReference>
<dbReference type="RefSeq" id="WP_002965723.1">
    <property type="nucleotide sequence ID" value="NZ_GG703779.1"/>
</dbReference>
<dbReference type="SMR" id="Q8YD04"/>
<dbReference type="KEGG" id="bme:BMEII0373"/>
<dbReference type="KEGG" id="bmel:DK63_2866"/>
<dbReference type="PATRIC" id="fig|224914.52.peg.3003"/>
<dbReference type="eggNOG" id="COG0665">
    <property type="taxonomic scope" value="Bacteria"/>
</dbReference>
<dbReference type="PhylomeDB" id="Q8YD04"/>
<dbReference type="Proteomes" id="UP000000419">
    <property type="component" value="Chromosome II"/>
</dbReference>
<dbReference type="GO" id="GO:0005737">
    <property type="term" value="C:cytoplasm"/>
    <property type="evidence" value="ECO:0007669"/>
    <property type="project" value="TreeGrafter"/>
</dbReference>
<dbReference type="GO" id="GO:0005886">
    <property type="term" value="C:plasma membrane"/>
    <property type="evidence" value="ECO:0007669"/>
    <property type="project" value="TreeGrafter"/>
</dbReference>
<dbReference type="GO" id="GO:0008718">
    <property type="term" value="F:D-amino-acid dehydrogenase activity"/>
    <property type="evidence" value="ECO:0007669"/>
    <property type="project" value="UniProtKB-UniRule"/>
</dbReference>
<dbReference type="GO" id="GO:0055130">
    <property type="term" value="P:D-alanine catabolic process"/>
    <property type="evidence" value="ECO:0007669"/>
    <property type="project" value="TreeGrafter"/>
</dbReference>
<dbReference type="FunFam" id="3.50.50.60:FF:000020">
    <property type="entry name" value="D-amino acid dehydrogenase"/>
    <property type="match status" value="1"/>
</dbReference>
<dbReference type="Gene3D" id="3.30.9.10">
    <property type="entry name" value="D-Amino Acid Oxidase, subunit A, domain 2"/>
    <property type="match status" value="1"/>
</dbReference>
<dbReference type="Gene3D" id="3.50.50.60">
    <property type="entry name" value="FAD/NAD(P)-binding domain"/>
    <property type="match status" value="2"/>
</dbReference>
<dbReference type="HAMAP" id="MF_01202">
    <property type="entry name" value="DadA"/>
    <property type="match status" value="1"/>
</dbReference>
<dbReference type="InterPro" id="IPR023080">
    <property type="entry name" value="DadA"/>
</dbReference>
<dbReference type="InterPro" id="IPR006076">
    <property type="entry name" value="FAD-dep_OxRdtase"/>
</dbReference>
<dbReference type="InterPro" id="IPR036188">
    <property type="entry name" value="FAD/NAD-bd_sf"/>
</dbReference>
<dbReference type="NCBIfam" id="NF001933">
    <property type="entry name" value="PRK00711.1"/>
    <property type="match status" value="1"/>
</dbReference>
<dbReference type="PANTHER" id="PTHR13847:SF280">
    <property type="entry name" value="D-AMINO ACID DEHYDROGENASE"/>
    <property type="match status" value="1"/>
</dbReference>
<dbReference type="PANTHER" id="PTHR13847">
    <property type="entry name" value="SARCOSINE DEHYDROGENASE-RELATED"/>
    <property type="match status" value="1"/>
</dbReference>
<dbReference type="Pfam" id="PF01266">
    <property type="entry name" value="DAO"/>
    <property type="match status" value="1"/>
</dbReference>
<dbReference type="SUPFAM" id="SSF54373">
    <property type="entry name" value="FAD-linked reductases, C-terminal domain"/>
    <property type="match status" value="1"/>
</dbReference>
<dbReference type="SUPFAM" id="SSF51905">
    <property type="entry name" value="FAD/NAD(P)-binding domain"/>
    <property type="match status" value="1"/>
</dbReference>
<proteinExistence type="inferred from homology"/>
<organism>
    <name type="scientific">Brucella melitensis biotype 1 (strain ATCC 23456 / CCUG 17765 / NCTC 10094 / 16M)</name>
    <dbReference type="NCBI Taxonomy" id="224914"/>
    <lineage>
        <taxon>Bacteria</taxon>
        <taxon>Pseudomonadati</taxon>
        <taxon>Pseudomonadota</taxon>
        <taxon>Alphaproteobacteria</taxon>
        <taxon>Hyphomicrobiales</taxon>
        <taxon>Brucellaceae</taxon>
        <taxon>Brucella/Ochrobactrum group</taxon>
        <taxon>Brucella</taxon>
    </lineage>
</organism>
<protein>
    <recommendedName>
        <fullName evidence="1">D-amino acid dehydrogenase</fullName>
        <ecNumber evidence="1">1.4.99.-</ecNumber>
    </recommendedName>
</protein>
<accession>Q8YD04</accession>
<reference key="1">
    <citation type="journal article" date="2002" name="Proc. Natl. Acad. Sci. U.S.A.">
        <title>The genome sequence of the facultative intracellular pathogen Brucella melitensis.</title>
        <authorList>
            <person name="DelVecchio V.G."/>
            <person name="Kapatral V."/>
            <person name="Redkar R.J."/>
            <person name="Patra G."/>
            <person name="Mujer C."/>
            <person name="Los T."/>
            <person name="Ivanova N."/>
            <person name="Anderson I."/>
            <person name="Bhattacharyya A."/>
            <person name="Lykidis A."/>
            <person name="Reznik G."/>
            <person name="Jablonski L."/>
            <person name="Larsen N."/>
            <person name="D'Souza M."/>
            <person name="Bernal A."/>
            <person name="Mazur M."/>
            <person name="Goltsman E."/>
            <person name="Selkov E."/>
            <person name="Elzer P.H."/>
            <person name="Hagius S."/>
            <person name="O'Callaghan D."/>
            <person name="Letesson J.-J."/>
            <person name="Haselkorn R."/>
            <person name="Kyrpides N.C."/>
            <person name="Overbeek R."/>
        </authorList>
    </citation>
    <scope>NUCLEOTIDE SEQUENCE [LARGE SCALE GENOMIC DNA]</scope>
    <source>
        <strain>ATCC 23456 / CCUG 17765 / NCTC 10094 / 16M</strain>
    </source>
</reference>
<feature type="chain" id="PRO_0000166128" description="D-amino acid dehydrogenase">
    <location>
        <begin position="1"/>
        <end position="416"/>
    </location>
</feature>
<feature type="binding site" evidence="1">
    <location>
        <begin position="3"/>
        <end position="17"/>
    </location>
    <ligand>
        <name>FAD</name>
        <dbReference type="ChEBI" id="CHEBI:57692"/>
    </ligand>
</feature>
<comment type="function">
    <text evidence="1">Oxidative deamination of D-amino acids.</text>
</comment>
<comment type="catalytic activity">
    <reaction evidence="1">
        <text>a D-alpha-amino acid + A + H2O = a 2-oxocarboxylate + AH2 + NH4(+)</text>
        <dbReference type="Rhea" id="RHEA:18125"/>
        <dbReference type="ChEBI" id="CHEBI:13193"/>
        <dbReference type="ChEBI" id="CHEBI:15377"/>
        <dbReference type="ChEBI" id="CHEBI:17499"/>
        <dbReference type="ChEBI" id="CHEBI:28938"/>
        <dbReference type="ChEBI" id="CHEBI:35179"/>
        <dbReference type="ChEBI" id="CHEBI:59871"/>
    </reaction>
</comment>
<comment type="cofactor">
    <cofactor evidence="1">
        <name>FAD</name>
        <dbReference type="ChEBI" id="CHEBI:57692"/>
    </cofactor>
</comment>
<comment type="similarity">
    <text evidence="1">Belongs to the DadA oxidoreductase family.</text>
</comment>
<keyword id="KW-0274">FAD</keyword>
<keyword id="KW-0285">Flavoprotein</keyword>
<keyword id="KW-0560">Oxidoreductase</keyword>
<evidence type="ECO:0000255" key="1">
    <source>
        <dbReference type="HAMAP-Rule" id="MF_01202"/>
    </source>
</evidence>
<name>DADA_BRUME</name>
<sequence>MQITILGSGVIGVTTAYYLAKLGHEVTVIDREEGPALETSFANAGQVSPGYASPWAAPGIPLKAAKWLFQKHAPLILRLTTDPVQYRWLLQMLANCTDSRYKINKTRMVRVAEYSRDCLIELRKDTGIEYDQRSQGTLQLFREQYQLDGIGKDIEVLRQDGVPFEVLDRDGCVNVEPALAHAKDKFVGGLRLPNDETGDCFKFTNALAKIAEGLGVKFRFGVNIKSLLMSGGKISGVETSEGIVTAERYVVALGSYTPALIKALGLNAPIYPVKGYSITAPIVDESRAPVSTVLDESYKIAITRLGDRIRVGGMAEVSGFTDDLPAARRATLDLSVTDLFPGGDLKAATFWSGLRPMTPDSTPIIGGTRYDNLFINAGHGTLGWTMACGSGRLLADLISGNKADIRADDLGIARYN</sequence>
<gene>
    <name evidence="1" type="primary">dadA</name>
    <name type="ordered locus">BMEII0373</name>
</gene>